<keyword id="KW-0997">Cell inner membrane</keyword>
<keyword id="KW-1003">Cell membrane</keyword>
<keyword id="KW-0472">Membrane</keyword>
<keyword id="KW-1185">Reference proteome</keyword>
<keyword id="KW-0812">Transmembrane</keyword>
<keyword id="KW-1133">Transmembrane helix</keyword>
<reference key="1">
    <citation type="journal article" date="2001" name="Nature">
        <title>Genome sequence of Yersinia pestis, the causative agent of plague.</title>
        <authorList>
            <person name="Parkhill J."/>
            <person name="Wren B.W."/>
            <person name="Thomson N.R."/>
            <person name="Titball R.W."/>
            <person name="Holden M.T.G."/>
            <person name="Prentice M.B."/>
            <person name="Sebaihia M."/>
            <person name="James K.D."/>
            <person name="Churcher C.M."/>
            <person name="Mungall K.L."/>
            <person name="Baker S."/>
            <person name="Basham D."/>
            <person name="Bentley S.D."/>
            <person name="Brooks K."/>
            <person name="Cerdeno-Tarraga A.-M."/>
            <person name="Chillingworth T."/>
            <person name="Cronin A."/>
            <person name="Davies R.M."/>
            <person name="Davis P."/>
            <person name="Dougan G."/>
            <person name="Feltwell T."/>
            <person name="Hamlin N."/>
            <person name="Holroyd S."/>
            <person name="Jagels K."/>
            <person name="Karlyshev A.V."/>
            <person name="Leather S."/>
            <person name="Moule S."/>
            <person name="Oyston P.C.F."/>
            <person name="Quail M.A."/>
            <person name="Rutherford K.M."/>
            <person name="Simmonds M."/>
            <person name="Skelton J."/>
            <person name="Stevens K."/>
            <person name="Whitehead S."/>
            <person name="Barrell B.G."/>
        </authorList>
    </citation>
    <scope>NUCLEOTIDE SEQUENCE [LARGE SCALE GENOMIC DNA]</scope>
    <source>
        <strain>CO-92 / Biovar Orientalis</strain>
    </source>
</reference>
<reference key="2">
    <citation type="journal article" date="2002" name="J. Bacteriol.">
        <title>Genome sequence of Yersinia pestis KIM.</title>
        <authorList>
            <person name="Deng W."/>
            <person name="Burland V."/>
            <person name="Plunkett G. III"/>
            <person name="Boutin A."/>
            <person name="Mayhew G.F."/>
            <person name="Liss P."/>
            <person name="Perna N.T."/>
            <person name="Rose D.J."/>
            <person name="Mau B."/>
            <person name="Zhou S."/>
            <person name="Schwartz D.C."/>
            <person name="Fetherston J.D."/>
            <person name="Lindler L.E."/>
            <person name="Brubaker R.R."/>
            <person name="Plano G.V."/>
            <person name="Straley S.C."/>
            <person name="McDonough K.A."/>
            <person name="Nilles M.L."/>
            <person name="Matson J.S."/>
            <person name="Blattner F.R."/>
            <person name="Perry R.D."/>
        </authorList>
    </citation>
    <scope>NUCLEOTIDE SEQUENCE [LARGE SCALE GENOMIC DNA]</scope>
    <source>
        <strain>KIM10+ / Biovar Mediaevalis</strain>
    </source>
</reference>
<reference key="3">
    <citation type="journal article" date="2004" name="DNA Res.">
        <title>Complete genome sequence of Yersinia pestis strain 91001, an isolate avirulent to humans.</title>
        <authorList>
            <person name="Song Y."/>
            <person name="Tong Z."/>
            <person name="Wang J."/>
            <person name="Wang L."/>
            <person name="Guo Z."/>
            <person name="Han Y."/>
            <person name="Zhang J."/>
            <person name="Pei D."/>
            <person name="Zhou D."/>
            <person name="Qin H."/>
            <person name="Pang X."/>
            <person name="Han Y."/>
            <person name="Zhai J."/>
            <person name="Li M."/>
            <person name="Cui B."/>
            <person name="Qi Z."/>
            <person name="Jin L."/>
            <person name="Dai R."/>
            <person name="Chen F."/>
            <person name="Li S."/>
            <person name="Ye C."/>
            <person name="Du Z."/>
            <person name="Lin W."/>
            <person name="Wang J."/>
            <person name="Yu J."/>
            <person name="Yang H."/>
            <person name="Wang J."/>
            <person name="Huang P."/>
            <person name="Yang R."/>
        </authorList>
    </citation>
    <scope>NUCLEOTIDE SEQUENCE [LARGE SCALE GENOMIC DNA]</scope>
    <source>
        <strain>91001 / Biovar Mediaevalis</strain>
    </source>
</reference>
<accession>Q8ZDJ8</accession>
<accession>Q0WDW3</accession>
<organism>
    <name type="scientific">Yersinia pestis</name>
    <dbReference type="NCBI Taxonomy" id="632"/>
    <lineage>
        <taxon>Bacteria</taxon>
        <taxon>Pseudomonadati</taxon>
        <taxon>Pseudomonadota</taxon>
        <taxon>Gammaproteobacteria</taxon>
        <taxon>Enterobacterales</taxon>
        <taxon>Yersiniaceae</taxon>
        <taxon>Yersinia</taxon>
    </lineage>
</organism>
<proteinExistence type="inferred from homology"/>
<evidence type="ECO:0000255" key="1">
    <source>
        <dbReference type="HAMAP-Rule" id="MF_01101"/>
    </source>
</evidence>
<gene>
    <name type="ordered locus">YPO2564</name>
    <name type="ordered locus">y1623</name>
    <name type="ordered locus">YP_2375</name>
</gene>
<name>Y2564_YERPE</name>
<protein>
    <recommendedName>
        <fullName evidence="1">UPF0208 membrane protein YPO2564/y1623/YP_2375</fullName>
    </recommendedName>
</protein>
<feature type="chain" id="PRO_0000080828" description="UPF0208 membrane protein YPO2564/y1623/YP_2375">
    <location>
        <begin position="1"/>
        <end position="151"/>
    </location>
</feature>
<feature type="transmembrane region" description="Helical" evidence="1">
    <location>
        <begin position="46"/>
        <end position="66"/>
    </location>
</feature>
<feature type="transmembrane region" description="Helical" evidence="1">
    <location>
        <begin position="69"/>
        <end position="89"/>
    </location>
</feature>
<sequence>MTIKPSDSVSWFQVLQRGQHYMKTWPADKRLAPVFPENRVTVVTRFGIRFMPPLAIFTLTWQIALGGQLGPAIATALFACGLPLQGLWWLGKRAITPLPPTLLQWFHEVRHKLFEAGQAVAPIEPIPTYQSLADLLKRAFKQLDKTFLDDL</sequence>
<dbReference type="EMBL" id="AL590842">
    <property type="protein sequence ID" value="CAL21189.1"/>
    <property type="molecule type" value="Genomic_DNA"/>
</dbReference>
<dbReference type="EMBL" id="AE009952">
    <property type="protein sequence ID" value="AAM85192.1"/>
    <property type="molecule type" value="Genomic_DNA"/>
</dbReference>
<dbReference type="EMBL" id="AE017042">
    <property type="protein sequence ID" value="AAS62580.1"/>
    <property type="molecule type" value="Genomic_DNA"/>
</dbReference>
<dbReference type="PIR" id="AB0313">
    <property type="entry name" value="AB0313"/>
</dbReference>
<dbReference type="RefSeq" id="YP_002347525.1">
    <property type="nucleotide sequence ID" value="NC_003143.1"/>
</dbReference>
<dbReference type="STRING" id="214092.YPO2564"/>
<dbReference type="PaxDb" id="214092-YPO2564"/>
<dbReference type="DNASU" id="1146570"/>
<dbReference type="EnsemblBacteria" id="AAS62580">
    <property type="protein sequence ID" value="AAS62580"/>
    <property type="gene ID" value="YP_2375"/>
</dbReference>
<dbReference type="KEGG" id="ype:YPO2564"/>
<dbReference type="KEGG" id="ypk:y1623"/>
<dbReference type="KEGG" id="ypm:YP_2375"/>
<dbReference type="PATRIC" id="fig|214092.21.peg.2987"/>
<dbReference type="eggNOG" id="COG3092">
    <property type="taxonomic scope" value="Bacteria"/>
</dbReference>
<dbReference type="HOGENOM" id="CLU_128746_0_0_6"/>
<dbReference type="OMA" id="IMPPVAV"/>
<dbReference type="OrthoDB" id="7066670at2"/>
<dbReference type="Proteomes" id="UP000000815">
    <property type="component" value="Chromosome"/>
</dbReference>
<dbReference type="Proteomes" id="UP000001019">
    <property type="component" value="Chromosome"/>
</dbReference>
<dbReference type="Proteomes" id="UP000002490">
    <property type="component" value="Chromosome"/>
</dbReference>
<dbReference type="GO" id="GO:0005886">
    <property type="term" value="C:plasma membrane"/>
    <property type="evidence" value="ECO:0007669"/>
    <property type="project" value="UniProtKB-SubCell"/>
</dbReference>
<dbReference type="HAMAP" id="MF_01101">
    <property type="entry name" value="UPF0208"/>
    <property type="match status" value="1"/>
</dbReference>
<dbReference type="InterPro" id="IPR007334">
    <property type="entry name" value="UPF0208"/>
</dbReference>
<dbReference type="NCBIfam" id="NF002493">
    <property type="entry name" value="PRK01816.1"/>
    <property type="match status" value="1"/>
</dbReference>
<dbReference type="Pfam" id="PF04217">
    <property type="entry name" value="DUF412"/>
    <property type="match status" value="1"/>
</dbReference>
<comment type="subcellular location">
    <subcellularLocation>
        <location evidence="1">Cell inner membrane</location>
        <topology evidence="1">Multi-pass membrane protein</topology>
    </subcellularLocation>
</comment>
<comment type="similarity">
    <text evidence="1">Belongs to the UPF0208 family.</text>
</comment>